<organism>
    <name type="scientific">Brucella abortus (strain S19)</name>
    <dbReference type="NCBI Taxonomy" id="430066"/>
    <lineage>
        <taxon>Bacteria</taxon>
        <taxon>Pseudomonadati</taxon>
        <taxon>Pseudomonadota</taxon>
        <taxon>Alphaproteobacteria</taxon>
        <taxon>Hyphomicrobiales</taxon>
        <taxon>Brucellaceae</taxon>
        <taxon>Brucella/Ochrobactrum group</taxon>
        <taxon>Brucella</taxon>
    </lineage>
</organism>
<proteinExistence type="inferred from homology"/>
<reference key="1">
    <citation type="journal article" date="2008" name="PLoS ONE">
        <title>Genome sequence of Brucella abortus vaccine strain S19 compared to virulent strains yields candidate virulence genes.</title>
        <authorList>
            <person name="Crasta O.R."/>
            <person name="Folkerts O."/>
            <person name="Fei Z."/>
            <person name="Mane S.P."/>
            <person name="Evans C."/>
            <person name="Martino-Catt S."/>
            <person name="Bricker B."/>
            <person name="Yu G."/>
            <person name="Du L."/>
            <person name="Sobral B.W."/>
        </authorList>
    </citation>
    <scope>NUCLEOTIDE SEQUENCE [LARGE SCALE GENOMIC DNA]</scope>
    <source>
        <strain>S19</strain>
    </source>
</reference>
<sequence length="75" mass="8817">MQVLVRDNNVDQALRALKKKMQREGIFREMKMRGHYEKPSEKRAREKAEAVRRARKLARKRAQREGLIGGRTGAR</sequence>
<keyword id="KW-0687">Ribonucleoprotein</keyword>
<keyword id="KW-0689">Ribosomal protein</keyword>
<protein>
    <recommendedName>
        <fullName evidence="1">Small ribosomal subunit protein bS21</fullName>
    </recommendedName>
    <alternativeName>
        <fullName evidence="2">30S ribosomal protein S21</fullName>
    </alternativeName>
</protein>
<feature type="chain" id="PRO_1000120594" description="Small ribosomal subunit protein bS21">
    <location>
        <begin position="1"/>
        <end position="75"/>
    </location>
</feature>
<gene>
    <name evidence="1" type="primary">rpsU</name>
    <name type="ordered locus">BAbS19_II02570</name>
</gene>
<dbReference type="EMBL" id="CP000888">
    <property type="protein sequence ID" value="ACD73768.1"/>
    <property type="molecule type" value="Genomic_DNA"/>
</dbReference>
<dbReference type="RefSeq" id="WP_002965682.1">
    <property type="nucleotide sequence ID" value="NC_010740.1"/>
</dbReference>
<dbReference type="SMR" id="B2SD64"/>
<dbReference type="GeneID" id="97533017"/>
<dbReference type="KEGG" id="bmc:BAbS19_II02570"/>
<dbReference type="HOGENOM" id="CLU_159258_0_1_5"/>
<dbReference type="Proteomes" id="UP000002565">
    <property type="component" value="Chromosome 2"/>
</dbReference>
<dbReference type="GO" id="GO:1990904">
    <property type="term" value="C:ribonucleoprotein complex"/>
    <property type="evidence" value="ECO:0007669"/>
    <property type="project" value="UniProtKB-KW"/>
</dbReference>
<dbReference type="GO" id="GO:0005840">
    <property type="term" value="C:ribosome"/>
    <property type="evidence" value="ECO:0007669"/>
    <property type="project" value="UniProtKB-KW"/>
</dbReference>
<dbReference type="GO" id="GO:0003735">
    <property type="term" value="F:structural constituent of ribosome"/>
    <property type="evidence" value="ECO:0007669"/>
    <property type="project" value="InterPro"/>
</dbReference>
<dbReference type="GO" id="GO:0006412">
    <property type="term" value="P:translation"/>
    <property type="evidence" value="ECO:0007669"/>
    <property type="project" value="UniProtKB-UniRule"/>
</dbReference>
<dbReference type="Gene3D" id="1.20.5.1150">
    <property type="entry name" value="Ribosomal protein S8"/>
    <property type="match status" value="1"/>
</dbReference>
<dbReference type="HAMAP" id="MF_00358">
    <property type="entry name" value="Ribosomal_bS21"/>
    <property type="match status" value="1"/>
</dbReference>
<dbReference type="InterPro" id="IPR001911">
    <property type="entry name" value="Ribosomal_bS21"/>
</dbReference>
<dbReference type="InterPro" id="IPR018278">
    <property type="entry name" value="Ribosomal_bS21_CS"/>
</dbReference>
<dbReference type="InterPro" id="IPR038380">
    <property type="entry name" value="Ribosomal_bS21_sf"/>
</dbReference>
<dbReference type="NCBIfam" id="TIGR00030">
    <property type="entry name" value="S21p"/>
    <property type="match status" value="1"/>
</dbReference>
<dbReference type="PANTHER" id="PTHR21109">
    <property type="entry name" value="MITOCHONDRIAL 28S RIBOSOMAL PROTEIN S21"/>
    <property type="match status" value="1"/>
</dbReference>
<dbReference type="PANTHER" id="PTHR21109:SF0">
    <property type="entry name" value="SMALL RIBOSOMAL SUBUNIT PROTEIN BS21M"/>
    <property type="match status" value="1"/>
</dbReference>
<dbReference type="Pfam" id="PF01165">
    <property type="entry name" value="Ribosomal_S21"/>
    <property type="match status" value="1"/>
</dbReference>
<dbReference type="PRINTS" id="PR00976">
    <property type="entry name" value="RIBOSOMALS21"/>
</dbReference>
<dbReference type="PROSITE" id="PS01181">
    <property type="entry name" value="RIBOSOMAL_S21"/>
    <property type="match status" value="1"/>
</dbReference>
<name>RS21_BRUA1</name>
<comment type="similarity">
    <text evidence="1">Belongs to the bacterial ribosomal protein bS21 family.</text>
</comment>
<accession>B2SD64</accession>
<evidence type="ECO:0000255" key="1">
    <source>
        <dbReference type="HAMAP-Rule" id="MF_00358"/>
    </source>
</evidence>
<evidence type="ECO:0000305" key="2"/>